<comment type="function">
    <text evidence="1">Catalyzes the condensation of isopentenyl diphosphate (IPP) with allylic pyrophosphates generating different type of terpenoids.</text>
</comment>
<comment type="cofactor">
    <cofactor evidence="1">
        <name>Mg(2+)</name>
        <dbReference type="ChEBI" id="CHEBI:18420"/>
    </cofactor>
    <text evidence="1">Binds 2 magnesium ions per subunit.</text>
</comment>
<comment type="subunit">
    <text evidence="2">Homodimer.</text>
</comment>
<comment type="similarity">
    <text evidence="3">Belongs to the UPP synthase family.</text>
</comment>
<keyword id="KW-0002">3D-structure</keyword>
<keyword id="KW-0460">Magnesium</keyword>
<keyword id="KW-0479">Metal-binding</keyword>
<keyword id="KW-1185">Reference proteome</keyword>
<keyword id="KW-0808">Transferase</keyword>
<accession>Q9PP99</accession>
<accession>Q0PA66</accession>
<evidence type="ECO:0000250" key="1"/>
<evidence type="ECO:0000269" key="2">
    <source ref="2"/>
</evidence>
<evidence type="ECO:0000305" key="3"/>
<evidence type="ECO:0007829" key="4">
    <source>
        <dbReference type="PDB" id="3UGS"/>
    </source>
</evidence>
<organism>
    <name type="scientific">Campylobacter jejuni subsp. jejuni serotype O:2 (strain ATCC 700819 / NCTC 11168)</name>
    <dbReference type="NCBI Taxonomy" id="192222"/>
    <lineage>
        <taxon>Bacteria</taxon>
        <taxon>Pseudomonadati</taxon>
        <taxon>Campylobacterota</taxon>
        <taxon>Epsilonproteobacteria</taxon>
        <taxon>Campylobacterales</taxon>
        <taxon>Campylobacteraceae</taxon>
        <taxon>Campylobacter</taxon>
    </lineage>
</organism>
<reference key="1">
    <citation type="journal article" date="2000" name="Nature">
        <title>The genome sequence of the food-borne pathogen Campylobacter jejuni reveals hypervariable sequences.</title>
        <authorList>
            <person name="Parkhill J."/>
            <person name="Wren B.W."/>
            <person name="Mungall K.L."/>
            <person name="Ketley J.M."/>
            <person name="Churcher C.M."/>
            <person name="Basham D."/>
            <person name="Chillingworth T."/>
            <person name="Davies R.M."/>
            <person name="Feltwell T."/>
            <person name="Holroyd S."/>
            <person name="Jagels K."/>
            <person name="Karlyshev A.V."/>
            <person name="Moule S."/>
            <person name="Pallen M.J."/>
            <person name="Penn C.W."/>
            <person name="Quail M.A."/>
            <person name="Rajandream M.A."/>
            <person name="Rutherford K.M."/>
            <person name="van Vliet A.H.M."/>
            <person name="Whitehead S."/>
            <person name="Barrell B.G."/>
        </authorList>
    </citation>
    <scope>NUCLEOTIDE SEQUENCE [LARGE SCALE GENOMIC DNA]</scope>
    <source>
        <strain>ATCC 700819 / NCTC 11168</strain>
    </source>
</reference>
<reference key="2">
    <citation type="submission" date="2011-11" db="PDB data bank">
        <title>Crystal structure of a probable undecaprenyl diphosph synthase (upps) from campylobacter jejuni.</title>
        <authorList>
            <person name="Nocek B."/>
            <person name="Gu M."/>
            <person name="Grimshaw S."/>
            <person name="Anderson W.F."/>
            <person name="Joachimiak A."/>
        </authorList>
    </citation>
    <scope>X-RAY CRYSTALLOGRAPHY (2.46 ANGSTROMS) IN COMPLEX WITH SUBSTRATE</scope>
    <scope>SUBUNIT</scope>
</reference>
<name>ISPT_CAMJE</name>
<protein>
    <recommendedName>
        <fullName>Isoprenyl transferase</fullName>
        <ecNumber>2.5.1.-</ecNumber>
    </recommendedName>
</protein>
<gene>
    <name type="primary">uppS</name>
    <name type="ordered locus">Cj0824</name>
</gene>
<sequence length="222" mass="26087">MNELKHLAVVMDGNRRWARAKGFLAKLGYSQGVKTMQKLMEVCMEENISNLSLFAFSTENWKRPKDEIDFIFELLDRCLDEALEKFEKNNVRLRAIGDLSRLEDKVREKITLVEEKTKHCDALCVNLAISYGARDEIIRAAKRVIEKKLELNEENLTQNLDLPLDVDLMLRVGNAKRLSNFLLWQCSYAEIYFSETLFPSLTKREFKRIIKEFRNRERTFGK</sequence>
<dbReference type="EC" id="2.5.1.-"/>
<dbReference type="EMBL" id="AL111168">
    <property type="protein sequence ID" value="CAL34952.1"/>
    <property type="molecule type" value="Genomic_DNA"/>
</dbReference>
<dbReference type="PIR" id="H81354">
    <property type="entry name" value="H81354"/>
</dbReference>
<dbReference type="RefSeq" id="WP_002852565.1">
    <property type="nucleotide sequence ID" value="NZ_SZUC01000001.1"/>
</dbReference>
<dbReference type="RefSeq" id="YP_002344231.1">
    <property type="nucleotide sequence ID" value="NC_002163.1"/>
</dbReference>
<dbReference type="PDB" id="3UGS">
    <property type="method" value="X-ray"/>
    <property type="resolution" value="2.46 A"/>
    <property type="chains" value="A/B=1-222"/>
</dbReference>
<dbReference type="PDBsum" id="3UGS"/>
<dbReference type="SMR" id="Q9PP99"/>
<dbReference type="IntAct" id="Q9PP99">
    <property type="interactions" value="11"/>
</dbReference>
<dbReference type="STRING" id="192222.Cj0824"/>
<dbReference type="PaxDb" id="192222-Cj0824"/>
<dbReference type="EnsemblBacteria" id="CAL34952">
    <property type="protein sequence ID" value="CAL34952"/>
    <property type="gene ID" value="Cj0824"/>
</dbReference>
<dbReference type="GeneID" id="905127"/>
<dbReference type="KEGG" id="cje:Cj0824"/>
<dbReference type="PATRIC" id="fig|192222.6.peg.812"/>
<dbReference type="eggNOG" id="COG0020">
    <property type="taxonomic scope" value="Bacteria"/>
</dbReference>
<dbReference type="HOGENOM" id="CLU_038505_1_1_7"/>
<dbReference type="OrthoDB" id="4191603at2"/>
<dbReference type="EvolutionaryTrace" id="Q9PP99"/>
<dbReference type="Proteomes" id="UP000000799">
    <property type="component" value="Chromosome"/>
</dbReference>
<dbReference type="GO" id="GO:0045547">
    <property type="term" value="F:ditrans,polycis-polyprenyl diphosphate synthase [(2E,6E)-farnesyl diphosphate specific] activity"/>
    <property type="evidence" value="ECO:0007669"/>
    <property type="project" value="TreeGrafter"/>
</dbReference>
<dbReference type="GO" id="GO:0000287">
    <property type="term" value="F:magnesium ion binding"/>
    <property type="evidence" value="ECO:0007669"/>
    <property type="project" value="UniProtKB-UniRule"/>
</dbReference>
<dbReference type="GO" id="GO:0016094">
    <property type="term" value="P:polyprenol biosynthetic process"/>
    <property type="evidence" value="ECO:0007669"/>
    <property type="project" value="TreeGrafter"/>
</dbReference>
<dbReference type="CDD" id="cd00475">
    <property type="entry name" value="Cis_IPPS"/>
    <property type="match status" value="1"/>
</dbReference>
<dbReference type="Gene3D" id="3.40.1180.10">
    <property type="entry name" value="Decaprenyl diphosphate synthase-like"/>
    <property type="match status" value="1"/>
</dbReference>
<dbReference type="HAMAP" id="MF_01139">
    <property type="entry name" value="ISPT"/>
    <property type="match status" value="1"/>
</dbReference>
<dbReference type="InterPro" id="IPR001441">
    <property type="entry name" value="UPP_synth-like"/>
</dbReference>
<dbReference type="InterPro" id="IPR018520">
    <property type="entry name" value="UPP_synth-like_CS"/>
</dbReference>
<dbReference type="InterPro" id="IPR036424">
    <property type="entry name" value="UPP_synth-like_sf"/>
</dbReference>
<dbReference type="NCBIfam" id="TIGR00055">
    <property type="entry name" value="uppS"/>
    <property type="match status" value="1"/>
</dbReference>
<dbReference type="PANTHER" id="PTHR10291:SF0">
    <property type="entry name" value="DEHYDRODOLICHYL DIPHOSPHATE SYNTHASE 2"/>
    <property type="match status" value="1"/>
</dbReference>
<dbReference type="PANTHER" id="PTHR10291">
    <property type="entry name" value="DEHYDRODOLICHYL DIPHOSPHATE SYNTHASE FAMILY MEMBER"/>
    <property type="match status" value="1"/>
</dbReference>
<dbReference type="Pfam" id="PF01255">
    <property type="entry name" value="Prenyltransf"/>
    <property type="match status" value="1"/>
</dbReference>
<dbReference type="SUPFAM" id="SSF64005">
    <property type="entry name" value="Undecaprenyl diphosphate synthase"/>
    <property type="match status" value="1"/>
</dbReference>
<dbReference type="PROSITE" id="PS01066">
    <property type="entry name" value="UPP_SYNTHASE"/>
    <property type="match status" value="1"/>
</dbReference>
<feature type="chain" id="PRO_0000123587" description="Isoprenyl transferase">
    <location>
        <begin position="1"/>
        <end position="222"/>
    </location>
</feature>
<feature type="active site" evidence="1">
    <location>
        <position position="12"/>
    </location>
</feature>
<feature type="active site" description="Proton acceptor" evidence="1">
    <location>
        <position position="60"/>
    </location>
</feature>
<feature type="binding site" evidence="1">
    <location>
        <position position="12"/>
    </location>
    <ligand>
        <name>Mg(2+)</name>
        <dbReference type="ChEBI" id="CHEBI:18420"/>
    </ligand>
</feature>
<feature type="binding site">
    <location>
        <begin position="13"/>
        <end position="16"/>
    </location>
    <ligand>
        <name>substrate</name>
    </ligand>
</feature>
<feature type="binding site" evidence="1">
    <location>
        <position position="17"/>
    </location>
    <ligand>
        <name>substrate</name>
    </ligand>
</feature>
<feature type="binding site">
    <location>
        <begin position="57"/>
        <end position="59"/>
    </location>
    <ligand>
        <name>substrate</name>
    </ligand>
</feature>
<feature type="binding site" evidence="1">
    <location>
        <position position="61"/>
    </location>
    <ligand>
        <name>substrate</name>
    </ligand>
</feature>
<feature type="binding site" evidence="1">
    <location>
        <position position="63"/>
    </location>
    <ligand>
        <name>substrate</name>
    </ligand>
</feature>
<feature type="binding site" evidence="2">
    <location>
        <position position="171"/>
    </location>
    <ligand>
        <name>substrate</name>
    </ligand>
</feature>
<feature type="binding site" evidence="1">
    <location>
        <begin position="177"/>
        <end position="179"/>
    </location>
    <ligand>
        <name>substrate</name>
    </ligand>
</feature>
<feature type="binding site" evidence="1">
    <location>
        <position position="190"/>
    </location>
    <ligand>
        <name>Mg(2+)</name>
        <dbReference type="ChEBI" id="CHEBI:18420"/>
    </ligand>
</feature>
<feature type="strand" evidence="4">
    <location>
        <begin position="6"/>
        <end position="11"/>
    </location>
</feature>
<feature type="helix" evidence="4">
    <location>
        <begin position="31"/>
        <end position="45"/>
    </location>
</feature>
<feature type="strand" evidence="4">
    <location>
        <begin position="50"/>
        <end position="58"/>
    </location>
</feature>
<feature type="helix" evidence="4">
    <location>
        <begin position="59"/>
        <end position="62"/>
    </location>
</feature>
<feature type="helix" evidence="4">
    <location>
        <begin position="65"/>
        <end position="85"/>
    </location>
</feature>
<feature type="turn" evidence="4">
    <location>
        <begin position="87"/>
        <end position="90"/>
    </location>
</feature>
<feature type="strand" evidence="4">
    <location>
        <begin position="91"/>
        <end position="97"/>
    </location>
</feature>
<feature type="helix" evidence="4">
    <location>
        <begin position="99"/>
        <end position="101"/>
    </location>
</feature>
<feature type="helix" evidence="4">
    <location>
        <begin position="104"/>
        <end position="117"/>
    </location>
</feature>
<feature type="strand" evidence="4">
    <location>
        <begin position="122"/>
        <end position="131"/>
    </location>
</feature>
<feature type="helix" evidence="4">
    <location>
        <begin position="133"/>
        <end position="146"/>
    </location>
</feature>
<feature type="helix" evidence="4">
    <location>
        <begin position="153"/>
        <end position="158"/>
    </location>
</feature>
<feature type="strand" evidence="4">
    <location>
        <begin position="160"/>
        <end position="162"/>
    </location>
</feature>
<feature type="strand" evidence="4">
    <location>
        <begin position="167"/>
        <end position="174"/>
    </location>
</feature>
<feature type="turn" evidence="4">
    <location>
        <begin position="183"/>
        <end position="188"/>
    </location>
</feature>
<feature type="strand" evidence="4">
    <location>
        <begin position="190"/>
        <end position="194"/>
    </location>
</feature>
<feature type="helix" evidence="4">
    <location>
        <begin position="203"/>
        <end position="215"/>
    </location>
</feature>
<proteinExistence type="evidence at protein level"/>